<gene>
    <name type="primary">ywmA</name>
    <name type="ordered locus">BSU36790</name>
</gene>
<keyword id="KW-0175">Coiled coil</keyword>
<keyword id="KW-1185">Reference proteome</keyword>
<protein>
    <recommendedName>
        <fullName>Uncharacterized protein YwmA</fullName>
    </recommendedName>
</protein>
<dbReference type="EMBL" id="Z81356">
    <property type="protein sequence ID" value="CAB03677.1"/>
    <property type="molecule type" value="Genomic_DNA"/>
</dbReference>
<dbReference type="EMBL" id="AL009126">
    <property type="protein sequence ID" value="CAB15696.1"/>
    <property type="molecule type" value="Genomic_DNA"/>
</dbReference>
<dbReference type="PIR" id="E70062">
    <property type="entry name" value="E70062"/>
</dbReference>
<dbReference type="RefSeq" id="NP_391560.1">
    <property type="nucleotide sequence ID" value="NC_000964.3"/>
</dbReference>
<dbReference type="RefSeq" id="WP_003243900.1">
    <property type="nucleotide sequence ID" value="NZ_OZ025638.1"/>
</dbReference>
<dbReference type="SMR" id="P70958"/>
<dbReference type="FunCoup" id="P70958">
    <property type="interactions" value="58"/>
</dbReference>
<dbReference type="PaxDb" id="224308-BSU36790"/>
<dbReference type="EnsemblBacteria" id="CAB15696">
    <property type="protein sequence ID" value="CAB15696"/>
    <property type="gene ID" value="BSU_36790"/>
</dbReference>
<dbReference type="GeneID" id="936991"/>
<dbReference type="KEGG" id="bsu:BSU36790"/>
<dbReference type="PATRIC" id="fig|224308.43.peg.3858"/>
<dbReference type="eggNOG" id="ENOG502ZKH3">
    <property type="taxonomic scope" value="Bacteria"/>
</dbReference>
<dbReference type="InParanoid" id="P70958"/>
<dbReference type="OrthoDB" id="2846451at2"/>
<dbReference type="BioCyc" id="BSUB:BSU36790-MONOMER"/>
<dbReference type="Proteomes" id="UP000001570">
    <property type="component" value="Chromosome"/>
</dbReference>
<proteinExistence type="predicted"/>
<sequence>MNHSFFQPEKQYGEDLPIFDQEWEAIAFYYDYRQSQIEELNELCQFFNISLTYTRESLEELENLYFQSIQELLLADWNLPIEEFEKMISVYLIDCVIARHEDAEWVVKPYPYKDGAYTLGFRRHRKSWHTMNACDGLYLRPKEDRPLLSLFDSLVRS</sequence>
<name>YWMA_BACSU</name>
<evidence type="ECO:0000255" key="1"/>
<feature type="chain" id="PRO_0000049984" description="Uncharacterized protein YwmA">
    <location>
        <begin position="1"/>
        <end position="157"/>
    </location>
</feature>
<feature type="coiled-coil region" evidence="1">
    <location>
        <begin position="36"/>
        <end position="63"/>
    </location>
</feature>
<organism>
    <name type="scientific">Bacillus subtilis (strain 168)</name>
    <dbReference type="NCBI Taxonomy" id="224308"/>
    <lineage>
        <taxon>Bacteria</taxon>
        <taxon>Bacillati</taxon>
        <taxon>Bacillota</taxon>
        <taxon>Bacilli</taxon>
        <taxon>Bacillales</taxon>
        <taxon>Bacillaceae</taxon>
        <taxon>Bacillus</taxon>
    </lineage>
</organism>
<accession>P70958</accession>
<reference key="1">
    <citation type="journal article" date="1997" name="Microbiology">
        <title>The Bacillus subtilis genome from gerBC (311 degrees) to licR (334 degrees).</title>
        <authorList>
            <person name="Presecan E."/>
            <person name="Moszer I."/>
            <person name="Boursier L."/>
            <person name="Cruz Ramos H."/>
            <person name="De La Fuente V."/>
            <person name="Hullo M.-F."/>
            <person name="Lelong C."/>
            <person name="Schleich S."/>
            <person name="Sekowska A."/>
            <person name="Song B.H."/>
            <person name="Villani G."/>
            <person name="Kunst F."/>
            <person name="Danchin A."/>
            <person name="Glaser P."/>
        </authorList>
    </citation>
    <scope>NUCLEOTIDE SEQUENCE [GENOMIC DNA]</scope>
    <source>
        <strain>168</strain>
    </source>
</reference>
<reference key="2">
    <citation type="journal article" date="1997" name="Nature">
        <title>The complete genome sequence of the Gram-positive bacterium Bacillus subtilis.</title>
        <authorList>
            <person name="Kunst F."/>
            <person name="Ogasawara N."/>
            <person name="Moszer I."/>
            <person name="Albertini A.M."/>
            <person name="Alloni G."/>
            <person name="Azevedo V."/>
            <person name="Bertero M.G."/>
            <person name="Bessieres P."/>
            <person name="Bolotin A."/>
            <person name="Borchert S."/>
            <person name="Borriss R."/>
            <person name="Boursier L."/>
            <person name="Brans A."/>
            <person name="Braun M."/>
            <person name="Brignell S.C."/>
            <person name="Bron S."/>
            <person name="Brouillet S."/>
            <person name="Bruschi C.V."/>
            <person name="Caldwell B."/>
            <person name="Capuano V."/>
            <person name="Carter N.M."/>
            <person name="Choi S.-K."/>
            <person name="Codani J.-J."/>
            <person name="Connerton I.F."/>
            <person name="Cummings N.J."/>
            <person name="Daniel R.A."/>
            <person name="Denizot F."/>
            <person name="Devine K.M."/>
            <person name="Duesterhoeft A."/>
            <person name="Ehrlich S.D."/>
            <person name="Emmerson P.T."/>
            <person name="Entian K.-D."/>
            <person name="Errington J."/>
            <person name="Fabret C."/>
            <person name="Ferrari E."/>
            <person name="Foulger D."/>
            <person name="Fritz C."/>
            <person name="Fujita M."/>
            <person name="Fujita Y."/>
            <person name="Fuma S."/>
            <person name="Galizzi A."/>
            <person name="Galleron N."/>
            <person name="Ghim S.-Y."/>
            <person name="Glaser P."/>
            <person name="Goffeau A."/>
            <person name="Golightly E.J."/>
            <person name="Grandi G."/>
            <person name="Guiseppi G."/>
            <person name="Guy B.J."/>
            <person name="Haga K."/>
            <person name="Haiech J."/>
            <person name="Harwood C.R."/>
            <person name="Henaut A."/>
            <person name="Hilbert H."/>
            <person name="Holsappel S."/>
            <person name="Hosono S."/>
            <person name="Hullo M.-F."/>
            <person name="Itaya M."/>
            <person name="Jones L.-M."/>
            <person name="Joris B."/>
            <person name="Karamata D."/>
            <person name="Kasahara Y."/>
            <person name="Klaerr-Blanchard M."/>
            <person name="Klein C."/>
            <person name="Kobayashi Y."/>
            <person name="Koetter P."/>
            <person name="Koningstein G."/>
            <person name="Krogh S."/>
            <person name="Kumano M."/>
            <person name="Kurita K."/>
            <person name="Lapidus A."/>
            <person name="Lardinois S."/>
            <person name="Lauber J."/>
            <person name="Lazarevic V."/>
            <person name="Lee S.-M."/>
            <person name="Levine A."/>
            <person name="Liu H."/>
            <person name="Masuda S."/>
            <person name="Mauel C."/>
            <person name="Medigue C."/>
            <person name="Medina N."/>
            <person name="Mellado R.P."/>
            <person name="Mizuno M."/>
            <person name="Moestl D."/>
            <person name="Nakai S."/>
            <person name="Noback M."/>
            <person name="Noone D."/>
            <person name="O'Reilly M."/>
            <person name="Ogawa K."/>
            <person name="Ogiwara A."/>
            <person name="Oudega B."/>
            <person name="Park S.-H."/>
            <person name="Parro V."/>
            <person name="Pohl T.M."/>
            <person name="Portetelle D."/>
            <person name="Porwollik S."/>
            <person name="Prescott A.M."/>
            <person name="Presecan E."/>
            <person name="Pujic P."/>
            <person name="Purnelle B."/>
            <person name="Rapoport G."/>
            <person name="Rey M."/>
            <person name="Reynolds S."/>
            <person name="Rieger M."/>
            <person name="Rivolta C."/>
            <person name="Rocha E."/>
            <person name="Roche B."/>
            <person name="Rose M."/>
            <person name="Sadaie Y."/>
            <person name="Sato T."/>
            <person name="Scanlan E."/>
            <person name="Schleich S."/>
            <person name="Schroeter R."/>
            <person name="Scoffone F."/>
            <person name="Sekiguchi J."/>
            <person name="Sekowska A."/>
            <person name="Seror S.J."/>
            <person name="Serror P."/>
            <person name="Shin B.-S."/>
            <person name="Soldo B."/>
            <person name="Sorokin A."/>
            <person name="Tacconi E."/>
            <person name="Takagi T."/>
            <person name="Takahashi H."/>
            <person name="Takemaru K."/>
            <person name="Takeuchi M."/>
            <person name="Tamakoshi A."/>
            <person name="Tanaka T."/>
            <person name="Terpstra P."/>
            <person name="Tognoni A."/>
            <person name="Tosato V."/>
            <person name="Uchiyama S."/>
            <person name="Vandenbol M."/>
            <person name="Vannier F."/>
            <person name="Vassarotti A."/>
            <person name="Viari A."/>
            <person name="Wambutt R."/>
            <person name="Wedler E."/>
            <person name="Wedler H."/>
            <person name="Weitzenegger T."/>
            <person name="Winters P."/>
            <person name="Wipat A."/>
            <person name="Yamamoto H."/>
            <person name="Yamane K."/>
            <person name="Yasumoto K."/>
            <person name="Yata K."/>
            <person name="Yoshida K."/>
            <person name="Yoshikawa H.-F."/>
            <person name="Zumstein E."/>
            <person name="Yoshikawa H."/>
            <person name="Danchin A."/>
        </authorList>
    </citation>
    <scope>NUCLEOTIDE SEQUENCE [LARGE SCALE GENOMIC DNA]</scope>
    <source>
        <strain>168</strain>
    </source>
</reference>